<gene>
    <name evidence="26" type="primary">Adgrv1</name>
    <name type="synonym">Gpr98</name>
    <name type="synonym">Kiaa0686</name>
    <name evidence="23" type="synonym">Mass1</name>
    <name evidence="21 22 23" type="synonym">Vlgr1</name>
</gene>
<proteinExistence type="evidence at protein level"/>
<protein>
    <recommendedName>
        <fullName evidence="25">Adhesion G-protein coupled receptor V1</fullName>
        <shortName evidence="25">ADGRV1</shortName>
        <ecNumber evidence="15">3.4.-.-</ecNumber>
    </recommendedName>
    <alternativeName>
        <fullName>G-protein coupled receptor 98</fullName>
    </alternativeName>
    <alternativeName>
        <fullName evidence="23">Monogenic audiogenic seizure susceptibility protein 1</fullName>
        <shortName evidence="23">MASS1</shortName>
    </alternativeName>
    <alternativeName>
        <fullName>Neurepin</fullName>
    </alternativeName>
    <alternativeName>
        <fullName evidence="20">Protein rueda</fullName>
    </alternativeName>
    <alternativeName>
        <fullName evidence="23">Very large G-protein coupled receptor 1</fullName>
        <shortName evidence="23">VLGR1</shortName>
    </alternativeName>
    <component>
        <recommendedName>
            <fullName evidence="25">ADGRV1 subunit alpha</fullName>
        </recommendedName>
    </component>
    <component>
        <recommendedName>
            <fullName evidence="25">ADGRV1 subunit beta</fullName>
        </recommendedName>
        <alternativeName>
            <fullName evidence="24">VLGR1 subunit beta</fullName>
            <shortName evidence="24">Vbeta</shortName>
        </alternativeName>
    </component>
</protein>
<dbReference type="EC" id="3.4.-.-" evidence="15"/>
<dbReference type="EMBL" id="AF405693">
    <property type="protein sequence ID" value="AAL06013.1"/>
    <property type="molecule type" value="mRNA"/>
</dbReference>
<dbReference type="EMBL" id="AF405694">
    <property type="protein sequence ID" value="AAL06014.1"/>
    <property type="molecule type" value="mRNA"/>
</dbReference>
<dbReference type="EMBL" id="AF435926">
    <property type="protein sequence ID" value="AAL30812.1"/>
    <property type="molecule type" value="mRNA"/>
</dbReference>
<dbReference type="EMBL" id="AB086166">
    <property type="protein sequence ID" value="BAC66505.2"/>
    <property type="molecule type" value="mRNA"/>
</dbReference>
<dbReference type="EMBL" id="AB086167">
    <property type="protein sequence ID" value="BAC66506.1"/>
    <property type="molecule type" value="mRNA"/>
</dbReference>
<dbReference type="EMBL" id="AK129190">
    <property type="protein sequence ID" value="BAC98000.3"/>
    <property type="molecule type" value="mRNA"/>
</dbReference>
<dbReference type="CCDS" id="CCDS36737.1">
    <molecule id="Q8VHN7-1"/>
</dbReference>
<dbReference type="ComplexPortal" id="CPX-2501">
    <property type="entry name" value="USH2 complex"/>
</dbReference>
<dbReference type="CORUM" id="Q8VHN7"/>
<dbReference type="FunCoup" id="Q8VHN7">
    <property type="interactions" value="168"/>
</dbReference>
<dbReference type="IntAct" id="Q8VHN7">
    <property type="interactions" value="1"/>
</dbReference>
<dbReference type="STRING" id="10090.ENSMUSP00000093245"/>
<dbReference type="GlyGen" id="Q8VHN7">
    <property type="glycosylation" value="10 sites, 8 N-linked glycans (8 sites), 1 O-linked glycan (1 site)"/>
</dbReference>
<dbReference type="iPTMnet" id="Q8VHN7"/>
<dbReference type="PhosphoSitePlus" id="Q8VHN7"/>
<dbReference type="jPOST" id="Q8VHN7"/>
<dbReference type="PaxDb" id="10090-ENSMUSP00000093245"/>
<dbReference type="ProteomicsDB" id="271279">
    <molecule id="Q8VHN7-1"/>
</dbReference>
<dbReference type="ProteomicsDB" id="271280">
    <molecule id="Q8VHN7-2"/>
</dbReference>
<dbReference type="ProteomicsDB" id="271281">
    <molecule id="Q8VHN7-3"/>
</dbReference>
<dbReference type="ProteomicsDB" id="271282">
    <molecule id="Q8VHN7-4"/>
</dbReference>
<dbReference type="ProteomicsDB" id="271283">
    <molecule id="Q8VHN7-5"/>
</dbReference>
<dbReference type="Antibodypedia" id="6556">
    <property type="antibodies" value="117 antibodies from 23 providers"/>
</dbReference>
<dbReference type="Ensembl" id="ENSMUST00000128585.9">
    <molecule id="Q8VHN7-5"/>
    <property type="protein sequence ID" value="ENSMUSP00000121899.2"/>
    <property type="gene ID" value="ENSMUSG00000069170.15"/>
</dbReference>
<dbReference type="UCSC" id="uc007rht.1">
    <molecule id="Q8VHN7-5"/>
    <property type="organism name" value="mouse"/>
</dbReference>
<dbReference type="AGR" id="MGI:1274784"/>
<dbReference type="MGI" id="MGI:1274784">
    <property type="gene designation" value="Adgrv1"/>
</dbReference>
<dbReference type="VEuPathDB" id="HostDB:ENSMUSG00000069170"/>
<dbReference type="eggNOG" id="KOG1306">
    <property type="taxonomic scope" value="Eukaryota"/>
</dbReference>
<dbReference type="GeneTree" id="ENSGT00940000154880"/>
<dbReference type="InParanoid" id="Q8VHN7"/>
<dbReference type="PhylomeDB" id="Q8VHN7"/>
<dbReference type="CD-CODE" id="CE726F99">
    <property type="entry name" value="Postsynaptic density"/>
</dbReference>
<dbReference type="ChiTaRS" id="Adgrv1">
    <property type="organism name" value="mouse"/>
</dbReference>
<dbReference type="PRO" id="PR:Q8VHN7"/>
<dbReference type="Proteomes" id="UP000000589">
    <property type="component" value="Chromosome 13"/>
</dbReference>
<dbReference type="RNAct" id="Q8VHN7">
    <property type="molecule type" value="protein"/>
</dbReference>
<dbReference type="Bgee" id="ENSMUSG00000069170">
    <property type="expression patterns" value="Expressed in floor plate of midbrain and 128 other cell types or tissues"/>
</dbReference>
<dbReference type="ExpressionAtlas" id="Q8VHN7">
    <property type="expression patterns" value="baseline and differential"/>
</dbReference>
<dbReference type="GO" id="GO:0005576">
    <property type="term" value="C:extracellular region"/>
    <property type="evidence" value="ECO:0007669"/>
    <property type="project" value="UniProtKB-SubCell"/>
</dbReference>
<dbReference type="GO" id="GO:0016020">
    <property type="term" value="C:membrane"/>
    <property type="evidence" value="ECO:0000303"/>
    <property type="project" value="UniProtKB"/>
</dbReference>
<dbReference type="GO" id="GO:1990075">
    <property type="term" value="C:periciliary membrane compartment"/>
    <property type="evidence" value="ECO:0000314"/>
    <property type="project" value="UniProtKB"/>
</dbReference>
<dbReference type="GO" id="GO:0048471">
    <property type="term" value="C:perinuclear region of cytoplasm"/>
    <property type="evidence" value="ECO:0000314"/>
    <property type="project" value="MGI"/>
</dbReference>
<dbReference type="GO" id="GO:0032391">
    <property type="term" value="C:photoreceptor connecting cilium"/>
    <property type="evidence" value="ECO:0000314"/>
    <property type="project" value="MGI"/>
</dbReference>
<dbReference type="GO" id="GO:0001917">
    <property type="term" value="C:photoreceptor inner segment"/>
    <property type="evidence" value="ECO:0007669"/>
    <property type="project" value="UniProtKB-SubCell"/>
</dbReference>
<dbReference type="GO" id="GO:0005886">
    <property type="term" value="C:plasma membrane"/>
    <property type="evidence" value="ECO:0000314"/>
    <property type="project" value="MGI"/>
</dbReference>
<dbReference type="GO" id="GO:0043235">
    <property type="term" value="C:receptor complex"/>
    <property type="evidence" value="ECO:0000266"/>
    <property type="project" value="MGI"/>
</dbReference>
<dbReference type="GO" id="GO:0002141">
    <property type="term" value="C:stereocilia ankle link"/>
    <property type="evidence" value="ECO:0000314"/>
    <property type="project" value="UniProtKB"/>
</dbReference>
<dbReference type="GO" id="GO:0002142">
    <property type="term" value="C:stereocilia ankle link complex"/>
    <property type="evidence" value="ECO:0000314"/>
    <property type="project" value="MGI"/>
</dbReference>
<dbReference type="GO" id="GO:0032420">
    <property type="term" value="C:stereocilium"/>
    <property type="evidence" value="ECO:0000269"/>
    <property type="project" value="MGI"/>
</dbReference>
<dbReference type="GO" id="GO:0060171">
    <property type="term" value="C:stereocilium membrane"/>
    <property type="evidence" value="ECO:0007669"/>
    <property type="project" value="UniProtKB-SubCell"/>
</dbReference>
<dbReference type="GO" id="GO:1990696">
    <property type="term" value="C:USH2 complex"/>
    <property type="evidence" value="ECO:0000314"/>
    <property type="project" value="UniProtKB"/>
</dbReference>
<dbReference type="GO" id="GO:0010855">
    <property type="term" value="F:adenylate cyclase inhibitor activity"/>
    <property type="evidence" value="ECO:0000314"/>
    <property type="project" value="UniProtKB"/>
</dbReference>
<dbReference type="GO" id="GO:0005509">
    <property type="term" value="F:calcium ion binding"/>
    <property type="evidence" value="ECO:0000303"/>
    <property type="project" value="UniProtKB"/>
</dbReference>
<dbReference type="GO" id="GO:0004930">
    <property type="term" value="F:G protein-coupled receptor activity"/>
    <property type="evidence" value="ECO:0000314"/>
    <property type="project" value="UniProtKB"/>
</dbReference>
<dbReference type="GO" id="GO:0001965">
    <property type="term" value="F:G-protein alpha-subunit binding"/>
    <property type="evidence" value="ECO:0000314"/>
    <property type="project" value="UniProtKB"/>
</dbReference>
<dbReference type="GO" id="GO:0016787">
    <property type="term" value="F:hydrolase activity"/>
    <property type="evidence" value="ECO:0007669"/>
    <property type="project" value="UniProtKB-KW"/>
</dbReference>
<dbReference type="GO" id="GO:0017022">
    <property type="term" value="F:myosin binding"/>
    <property type="evidence" value="ECO:0000353"/>
    <property type="project" value="MGI"/>
</dbReference>
<dbReference type="GO" id="GO:0007166">
    <property type="term" value="P:cell surface receptor signaling pathway"/>
    <property type="evidence" value="ECO:0007669"/>
    <property type="project" value="InterPro"/>
</dbReference>
<dbReference type="GO" id="GO:0098609">
    <property type="term" value="P:cell-cell adhesion"/>
    <property type="evidence" value="ECO:0000303"/>
    <property type="project" value="UniProtKB"/>
</dbReference>
<dbReference type="GO" id="GO:0071277">
    <property type="term" value="P:cellular response to calcium ion"/>
    <property type="evidence" value="ECO:0000314"/>
    <property type="project" value="MGI"/>
</dbReference>
<dbReference type="GO" id="GO:0050910">
    <property type="term" value="P:detection of mechanical stimulus involved in sensory perception of sound"/>
    <property type="evidence" value="ECO:0000315"/>
    <property type="project" value="MGI"/>
</dbReference>
<dbReference type="GO" id="GO:0051649">
    <property type="term" value="P:establishment of localization in cell"/>
    <property type="evidence" value="ECO:0000315"/>
    <property type="project" value="MGI"/>
</dbReference>
<dbReference type="GO" id="GO:0045184">
    <property type="term" value="P:establishment of protein localization"/>
    <property type="evidence" value="ECO:0000315"/>
    <property type="project" value="MGI"/>
</dbReference>
<dbReference type="GO" id="GO:0007186">
    <property type="term" value="P:G protein-coupled receptor signaling pathway"/>
    <property type="evidence" value="ECO:0000314"/>
    <property type="project" value="UniProtKB"/>
</dbReference>
<dbReference type="GO" id="GO:0048839">
    <property type="term" value="P:inner ear development"/>
    <property type="evidence" value="ECO:0000315"/>
    <property type="project" value="MGI"/>
</dbReference>
<dbReference type="GO" id="GO:0060113">
    <property type="term" value="P:inner ear receptor cell differentiation"/>
    <property type="evidence" value="ECO:0000303"/>
    <property type="project" value="ComplexPortal"/>
</dbReference>
<dbReference type="GO" id="GO:0060122">
    <property type="term" value="P:inner ear receptor cell stereocilium organization"/>
    <property type="evidence" value="ECO:0000315"/>
    <property type="project" value="MGI"/>
</dbReference>
<dbReference type="GO" id="GO:0007194">
    <property type="term" value="P:negative regulation of adenylate cyclase activity"/>
    <property type="evidence" value="ECO:0000314"/>
    <property type="project" value="UniProtKB"/>
</dbReference>
<dbReference type="GO" id="GO:0007399">
    <property type="term" value="P:nervous system development"/>
    <property type="evidence" value="ECO:0000303"/>
    <property type="project" value="UniProtKB"/>
</dbReference>
<dbReference type="GO" id="GO:0050877">
    <property type="term" value="P:nervous system process"/>
    <property type="evidence" value="ECO:0000315"/>
    <property type="project" value="MGI"/>
</dbReference>
<dbReference type="GO" id="GO:0030501">
    <property type="term" value="P:positive regulation of bone mineralization"/>
    <property type="evidence" value="ECO:0000315"/>
    <property type="project" value="UniProtKB"/>
</dbReference>
<dbReference type="GO" id="GO:0141163">
    <property type="term" value="P:positive regulation of cAMP/PKA signal transduction"/>
    <property type="evidence" value="ECO:0000314"/>
    <property type="project" value="MGI"/>
</dbReference>
<dbReference type="GO" id="GO:0031647">
    <property type="term" value="P:regulation of protein stability"/>
    <property type="evidence" value="ECO:0000315"/>
    <property type="project" value="UniProtKB"/>
</dbReference>
<dbReference type="GO" id="GO:0097264">
    <property type="term" value="P:self proteolysis"/>
    <property type="evidence" value="ECO:0000314"/>
    <property type="project" value="UniProtKB"/>
</dbReference>
<dbReference type="GO" id="GO:0007605">
    <property type="term" value="P:sensory perception of sound"/>
    <property type="evidence" value="ECO:0000315"/>
    <property type="project" value="MGI"/>
</dbReference>
<dbReference type="GO" id="GO:0007601">
    <property type="term" value="P:visual perception"/>
    <property type="evidence" value="ECO:0000315"/>
    <property type="project" value="MGI"/>
</dbReference>
<dbReference type="FunFam" id="2.60.40.2030:FF:000017">
    <property type="entry name" value="Adhesion G protein-coupled receptor V1"/>
    <property type="match status" value="2"/>
</dbReference>
<dbReference type="FunFam" id="2.60.40.2030:FF:000020">
    <property type="entry name" value="Adhesion G protein-coupled receptor V1"/>
    <property type="match status" value="2"/>
</dbReference>
<dbReference type="FunFam" id="2.60.40.2030:FF:000021">
    <property type="entry name" value="Adhesion G protein-coupled receptor V1"/>
    <property type="match status" value="2"/>
</dbReference>
<dbReference type="FunFam" id="2.60.40.2030:FF:000023">
    <property type="entry name" value="Adhesion G protein-coupled receptor V1"/>
    <property type="match status" value="1"/>
</dbReference>
<dbReference type="FunFam" id="2.60.40.2030:FF:000026">
    <property type="entry name" value="Adhesion G protein-coupled receptor V1"/>
    <property type="match status" value="1"/>
</dbReference>
<dbReference type="FunFam" id="2.60.40.2030:FF:000031">
    <property type="entry name" value="Adhesion G protein-coupled receptor V1"/>
    <property type="match status" value="1"/>
</dbReference>
<dbReference type="FunFam" id="2.60.40.2030:FF:000033">
    <property type="entry name" value="Adhesion G protein-coupled receptor V1"/>
    <property type="match status" value="1"/>
</dbReference>
<dbReference type="FunFam" id="2.60.40.2030:FF:000042">
    <property type="entry name" value="Adhesion G protein-coupled receptor V1"/>
    <property type="match status" value="1"/>
</dbReference>
<dbReference type="FunFam" id="2.60.40.2030:FF:000044">
    <property type="entry name" value="Adhesion G protein-coupled receptor V1"/>
    <property type="match status" value="1"/>
</dbReference>
<dbReference type="FunFam" id="2.60.40.2030:FF:000046">
    <property type="entry name" value="Adhesion G protein-coupled receptor V1"/>
    <property type="match status" value="1"/>
</dbReference>
<dbReference type="FunFam" id="1.20.1070.10:FF:000178">
    <property type="entry name" value="Adhesion G-protein coupled receptor V1"/>
    <property type="match status" value="1"/>
</dbReference>
<dbReference type="FunFam" id="2.60.120.200:FF:000106">
    <property type="entry name" value="Adhesion G-protein coupled receptor V1"/>
    <property type="match status" value="1"/>
</dbReference>
<dbReference type="FunFam" id="2.60.220.50:FF:000020">
    <property type="entry name" value="Adhesion G-protein coupled receptor V1"/>
    <property type="match status" value="1"/>
</dbReference>
<dbReference type="FunFam" id="2.60.40.2030:FF:000007">
    <property type="entry name" value="Adhesion G-protein coupled receptor V1"/>
    <property type="match status" value="7"/>
</dbReference>
<dbReference type="FunFam" id="2.60.40.2030:FF:000012">
    <property type="entry name" value="Adhesion G-protein coupled receptor V1"/>
    <property type="match status" value="1"/>
</dbReference>
<dbReference type="FunFam" id="2.60.40.2030:FF:000013">
    <property type="entry name" value="Adhesion G-protein coupled receptor V1"/>
    <property type="match status" value="1"/>
</dbReference>
<dbReference type="FunFam" id="2.60.40.2030:FF:000014">
    <property type="entry name" value="Adhesion G-protein coupled receptor V1"/>
    <property type="match status" value="1"/>
</dbReference>
<dbReference type="FunFam" id="2.60.40.2030:FF:000022">
    <property type="entry name" value="Adhesion G-protein coupled receptor V1"/>
    <property type="match status" value="1"/>
</dbReference>
<dbReference type="FunFam" id="2.60.40.2030:FF:000028">
    <property type="entry name" value="Adhesion G-protein coupled receptor V1"/>
    <property type="match status" value="1"/>
</dbReference>
<dbReference type="FunFam" id="2.60.40.2030:FF:000030">
    <property type="entry name" value="Adhesion G-protein coupled receptor V1"/>
    <property type="match status" value="1"/>
</dbReference>
<dbReference type="FunFam" id="2.60.40.2030:FF:000047">
    <property type="entry name" value="Adhesion G-protein coupled receptor V1"/>
    <property type="match status" value="1"/>
</dbReference>
<dbReference type="FunFam" id="2.60.40.2030:FF:000048">
    <property type="entry name" value="Adhesion G-protein coupled receptor V1"/>
    <property type="match status" value="1"/>
</dbReference>
<dbReference type="FunFam" id="2.60.40.2030:FF:000009">
    <property type="entry name" value="adhesion G-protein coupled receptor V1"/>
    <property type="match status" value="2"/>
</dbReference>
<dbReference type="Gene3D" id="2.60.120.200">
    <property type="match status" value="1"/>
</dbReference>
<dbReference type="Gene3D" id="2.60.220.50">
    <property type="match status" value="1"/>
</dbReference>
<dbReference type="Gene3D" id="2.60.40.2030">
    <property type="match status" value="35"/>
</dbReference>
<dbReference type="Gene3D" id="1.20.1070.10">
    <property type="entry name" value="Rhodopsin 7-helix transmembrane proteins"/>
    <property type="match status" value="1"/>
</dbReference>
<dbReference type="InterPro" id="IPR026919">
    <property type="entry name" value="ADGRV1"/>
</dbReference>
<dbReference type="InterPro" id="IPR038081">
    <property type="entry name" value="CalX-like_sf"/>
</dbReference>
<dbReference type="InterPro" id="IPR003644">
    <property type="entry name" value="Calx_beta"/>
</dbReference>
<dbReference type="InterPro" id="IPR013320">
    <property type="entry name" value="ConA-like_dom_sf"/>
</dbReference>
<dbReference type="InterPro" id="IPR009039">
    <property type="entry name" value="EAR"/>
</dbReference>
<dbReference type="InterPro" id="IPR005492">
    <property type="entry name" value="EPTP"/>
</dbReference>
<dbReference type="InterPro" id="IPR057244">
    <property type="entry name" value="GAIN_B"/>
</dbReference>
<dbReference type="InterPro" id="IPR046338">
    <property type="entry name" value="GAIN_dom_sf"/>
</dbReference>
<dbReference type="InterPro" id="IPR017981">
    <property type="entry name" value="GPCR_2-like_7TM"/>
</dbReference>
<dbReference type="InterPro" id="IPR000832">
    <property type="entry name" value="GPCR_2_secretin-like"/>
</dbReference>
<dbReference type="InterPro" id="IPR006558">
    <property type="entry name" value="LamG-like"/>
</dbReference>
<dbReference type="PANTHER" id="PTHR46682">
    <property type="entry name" value="ADHESION G-PROTEIN COUPLED RECEPTOR V1"/>
    <property type="match status" value="1"/>
</dbReference>
<dbReference type="PANTHER" id="PTHR46682:SF1">
    <property type="entry name" value="ADHESION G-PROTEIN COUPLED RECEPTOR V1"/>
    <property type="match status" value="1"/>
</dbReference>
<dbReference type="Pfam" id="PF00002">
    <property type="entry name" value="7tm_2"/>
    <property type="match status" value="1"/>
</dbReference>
<dbReference type="Pfam" id="PF03160">
    <property type="entry name" value="Calx-beta"/>
    <property type="match status" value="34"/>
</dbReference>
<dbReference type="Pfam" id="PF03736">
    <property type="entry name" value="EPTP"/>
    <property type="match status" value="1"/>
</dbReference>
<dbReference type="Pfam" id="PF13385">
    <property type="entry name" value="Laminin_G_3"/>
    <property type="match status" value="1"/>
</dbReference>
<dbReference type="SMART" id="SM00237">
    <property type="entry name" value="Calx_beta"/>
    <property type="match status" value="20"/>
</dbReference>
<dbReference type="SMART" id="SM00560">
    <property type="entry name" value="LamGL"/>
    <property type="match status" value="1"/>
</dbReference>
<dbReference type="SUPFAM" id="SSF141072">
    <property type="entry name" value="CalX-like"/>
    <property type="match status" value="38"/>
</dbReference>
<dbReference type="SUPFAM" id="SSF49899">
    <property type="entry name" value="Concanavalin A-like lectins/glucanases"/>
    <property type="match status" value="1"/>
</dbReference>
<dbReference type="PROSITE" id="PS50912">
    <property type="entry name" value="EAR"/>
    <property type="match status" value="6"/>
</dbReference>
<dbReference type="PROSITE" id="PS50261">
    <property type="entry name" value="G_PROTEIN_RECEP_F2_4"/>
    <property type="match status" value="1"/>
</dbReference>
<dbReference type="PROSITE" id="PS50221">
    <property type="entry name" value="GAIN_B"/>
    <property type="match status" value="1"/>
</dbReference>
<comment type="function">
    <text evidence="7 9 10 11 13 15">G-protein coupled receptor which has an essential role in the development of hearing and vision (PubMed:16775142, PubMed:17567809, PubMed:20502675, PubMed:24191038). Couples to G-alpha(i)-proteins, GNAI1/2/3, G-alpha(q)-proteins, GNAQ, as well as G-alpha(s)-proteins, GNAS, inhibiting adenylate cyclase (AC) activity and cAMP production (PubMed:24191038, PubMed:24962568). Required for the hair bundle ankle formation, which connects growing stereocilia in developing cochlear hair cells of the inner ear (PubMed:16775142, PubMed:17567809). In response to extracellular calcium, activates kinases PKA and PKC to regulate myelination by inhibiting the ubiquitination of MAG, thus enhancing the stability of this protein in myelin-forming cells of the auditory pathway (PubMed:24191038). In retina photoreceptors, the USH2 complex is required for the maintenance of periciliary membrane complex that seems to play a role in regulating intracellular protein transport (PubMed:20502675). Involved in the regulation of bone metabolism (PubMed:22419726).</text>
</comment>
<comment type="function">
    <molecule>ADGRV1 subunit beta</molecule>
    <text evidence="15">Cleaved ADGRV1 beta-subunit couples with G-alpha(i)-proteins, GNAI1/2/3, and constitutively inhibits adenylate cyclase (AC) activity with a stronger effect than full ADGRV1.</text>
</comment>
<comment type="subunit">
    <text evidence="9 10 12 15 16">Forms a heterodimer, consisting of a large extracellular region (alpha subunit) non-covalently linked to a seven-transmembrane moiety (beta subunit) (PubMed:24962568). Interacts (via the cytoplasmic region) with PDZD7 (PubMed:23055499, PubMed:24962568). Component of USH2 complex, composed of ADGRV1, PDZD7, USH2A and WHRN (PubMed:20502675, PubMed:25406310). Interacts with USH2A and WHRN (PubMed:20502675, PubMed:23055499). Interacts (via the cytoplasmic region) with MYO7A (via MyTH4-FERM domains) (PubMed:17567809).</text>
</comment>
<comment type="subcellular location">
    <subcellularLocation>
        <location evidence="6">Cell membrane</location>
        <topology evidence="6">Multi-pass membrane protein</topology>
    </subcellularLocation>
    <subcellularLocation>
        <location evidence="7 9 10 14 17">Cell projection</location>
        <location evidence="7 9 10 14 17">Stereocilium membrane</location>
    </subcellularLocation>
    <subcellularLocation>
        <location evidence="10 14">Photoreceptor inner segment</location>
    </subcellularLocation>
    <text evidence="7 10 14 17">Localizes at the ankle region of the stereocilia (PubMed:16775142, PubMed:27525485). In photoreceptors, localizes at a plasma membrane microdomain in the apical inner segment that surrounds the connecting cilia called periciliary membrane complex (PubMed:20502675, PubMed:24334608).</text>
</comment>
<comment type="subcellular location">
    <molecule>Isoform 4</molecule>
    <subcellularLocation>
        <location evidence="6">Secreted</location>
    </subcellularLocation>
</comment>
<comment type="subcellular location">
    <molecule>Isoform 5</molecule>
    <subcellularLocation>
        <location evidence="6">Secreted</location>
    </subcellularLocation>
</comment>
<comment type="alternative products">
    <event type="alternative splicing"/>
    <isoform>
        <id>Q8VHN7-1</id>
        <name>1</name>
        <sequence type="displayed"/>
    </isoform>
    <isoform>
        <id>Q8VHN7-2</id>
        <name>2</name>
        <name>Mass1.2</name>
        <sequence type="described" ref="VSP_017952 VSP_017955 VSP_017959 VSP_017960"/>
    </isoform>
    <isoform>
        <id>Q8VHN7-3</id>
        <name>3</name>
        <name>Mass1.3</name>
        <sequence type="described" ref="VSP_017951 VSP_017958 VSP_017959 VSP_017960"/>
    </isoform>
    <isoform>
        <id>Q8VHN7-4</id>
        <name>4</name>
        <name>Neurepin-2</name>
        <name>Vlgr1e</name>
        <sequence type="described" ref="VSP_017956 VSP_017957"/>
    </isoform>
    <isoform>
        <id>Q8VHN7-5</id>
        <name>5</name>
        <name>Neurepin-1</name>
        <name>Vlgr1d</name>
        <sequence type="described" ref="VSP_017953 VSP_017954"/>
    </isoform>
</comment>
<comment type="tissue specificity">
    <text evidence="7 9 10 13">Expressed by oligodendrocytes. In midbrain, enriched in the myelinated regions of the superior and inferior colliculi (PubMed:24191038). In the cochlea, expressed in developing hair cells (PubMed:16775142, PubMed:17567809, PubMed:20502675). Expressed by photoreceptors in the retina (PubMed:20502675).</text>
</comment>
<comment type="developmental stage">
    <text evidence="5 7 10">High level expression restricted to the developing central nervous system and eye. At mid-gestation expression is prominent in the ventricular zone and in the eye. At late gestation expression declines (PubMed:11606593). In the inner ear, highly expressed at 17 dpc at the base of emerging hair bundle and on peripheral subpopulation of microvilli located at the neural edge of the hair cell apical surface. At P0-P1, the expression extends from the very base of the stereocilia. From P4 to P9, expression becomes restricted, forming a basal band-like pattern at the ankle link level above the stereocilia. From P12 onward, no longer detectable in the cochlear hair cells (PubMed:16775142, PubMed:20502675). In the utricle of the vestibular system, the expression persists for longer, being present at both P4 and P11, but no longer detectable by P18 (PubMed:16775142).</text>
</comment>
<comment type="domain">
    <text evidence="7">The 7 transmembrane domain is required in hair cells for the hair bundle ankle formation.</text>
</comment>
<comment type="PTM">
    <text evidence="15">Autoproteolytically cleaved into 2 subunits, an extracellular alpha subunit and a seven-transmembrane subunit.</text>
</comment>
<comment type="disruption phenotype">
    <text evidence="6 8 11">Mice display hearing loss and audiogenic epilepsy (PubMed:15606908, PubMed:17329413). Audiogenic epilepsy syndrome is an autosomal recessive mutation, characterized by generalized self-sustained convulsive seizures in which acoustics stimulations evoke wild running, tonic flexion and extension (PubMed:15606908). They are induced by exposing animals to a loud noise during the early stages of their development (PubMed:15606908). Mutants show a decreased bone mineral density (PubMed:22419726).</text>
</comment>
<comment type="miscellaneous">
    <molecule>Isoform 4</molecule>
    <text evidence="25">Secreted.</text>
</comment>
<comment type="miscellaneous">
    <molecule>Isoform 5</molecule>
    <text evidence="25">Secreted.</text>
</comment>
<comment type="similarity">
    <text evidence="25">Belongs to the G-protein coupled receptor 2 family. Adhesion G-protein coupled receptor (ADGR) subfamily.</text>
</comment>
<evidence type="ECO:0000255" key="1"/>
<evidence type="ECO:0000255" key="2">
    <source>
        <dbReference type="PROSITE-ProRule" id="PRU00075"/>
    </source>
</evidence>
<evidence type="ECO:0000255" key="3">
    <source>
        <dbReference type="PROSITE-ProRule" id="PRU00098"/>
    </source>
</evidence>
<evidence type="ECO:0000256" key="4">
    <source>
        <dbReference type="SAM" id="MobiDB-lite"/>
    </source>
</evidence>
<evidence type="ECO:0000269" key="5">
    <source>
    </source>
</evidence>
<evidence type="ECO:0000269" key="6">
    <source>
    </source>
</evidence>
<evidence type="ECO:0000269" key="7">
    <source>
    </source>
</evidence>
<evidence type="ECO:0000269" key="8">
    <source>
    </source>
</evidence>
<evidence type="ECO:0000269" key="9">
    <source>
    </source>
</evidence>
<evidence type="ECO:0000269" key="10">
    <source>
    </source>
</evidence>
<evidence type="ECO:0000269" key="11">
    <source>
    </source>
</evidence>
<evidence type="ECO:0000269" key="12">
    <source>
    </source>
</evidence>
<evidence type="ECO:0000269" key="13">
    <source>
    </source>
</evidence>
<evidence type="ECO:0000269" key="14">
    <source>
    </source>
</evidence>
<evidence type="ECO:0000269" key="15">
    <source>
    </source>
</evidence>
<evidence type="ECO:0000269" key="16">
    <source>
    </source>
</evidence>
<evidence type="ECO:0000269" key="17">
    <source>
    </source>
</evidence>
<evidence type="ECO:0000303" key="18">
    <source>
    </source>
</evidence>
<evidence type="ECO:0000303" key="19">
    <source>
    </source>
</evidence>
<evidence type="ECO:0000303" key="20">
    <source>
    </source>
</evidence>
<evidence type="ECO:0000303" key="21">
    <source>
    </source>
</evidence>
<evidence type="ECO:0000303" key="22">
    <source>
    </source>
</evidence>
<evidence type="ECO:0000303" key="23">
    <source>
    </source>
</evidence>
<evidence type="ECO:0000303" key="24">
    <source>
    </source>
</evidence>
<evidence type="ECO:0000305" key="25"/>
<evidence type="ECO:0000312" key="26">
    <source>
        <dbReference type="MGI" id="MGI:1274784"/>
    </source>
</evidence>
<sequence length="6298" mass="687458">MSVTSEPGMISSFLLVYLSTLFISFVFGEAEIRFTGQTEFFVNETSTTVIRLVIERIGEPANVTAIVSLSGEDTGDFFDTYAAAFIPARGTNRTVYIAVCDDDLPEPDETFTFHLTLQKPSANVKLGWPRAASVTILSNDNAFGIISFSTPSSISVIEPRSRNASVPLTLIREKGTYGMVTVTFDVSGGPNPPEEDLNPVRGNITFPPGRATVIYNVTVLDDEVPENDELFLIQLRSVEGGAEINASRSSVEIIVKKNDSPVNFMQSVYVVPEDDHVLTIPVLRGKDSDGNLIGSDETQVSIRYKVMTWDSTAHAQQNVDFIDLQPDTTLVFPPFVHESHLKFQIIDDLIPEIAESFHIMLLKNTLQGDAVLMGPSTVQVTIKPNDKPYGVLSFNSILFERPVIIDEDTASSSRFEEIAVVRNGGTHGNVSVSWVLTRNSSDPSPVTADITPASGTLQFAQGQMLAPISLVVFDDDLPEEAEAYLLTILPHTIQGGAEVSEPAQLLFYIQDSDNVYGEIAFFPGESQKIESSPSERSLSLSLARRGGSKGDVRVIYSALYIPAGAMDPLRAKDGILNTSRRSSLLFPEQNQQVSIKLPIRNDAFLQNGAHFLVQLEAVVLVNIFPPIPPVSPRFGEIRNISLLVTPAIANGEIGFLSNLPIILHEPKDSSAEVVSIPLHRDGTDGQATVYWSLRPSGFNSKAVTLDDAGPFNGSVVFLSGQNETSINITVKGDDIPELNETVTLSLDRVSVDSDVLKSGYTSRDLIILENDDPGGIFEFSYDSRGPYVIKEGDAVELRITRSRGSLVKQFLRFHVEPRESNEFYGNMGVLEFTPGEREVVITLLTRLDGTPELDEHFWVILSSHGERESKLGRATLVNITILKNDYPHGIIEFVSDGLSASIKESKGEDIYHAVYGVIRTRGNFGAVNVSWMVSPDFTQDVFPVQGTVCFGDQEFFKNITVYSLVDEIPEEMEEFTIILLNATGGAQTGIRTTASLRILRNDDPVYFAEPCVLRVQEGETANFTVLRNGSVDGACTVQYATVDGKASGEEGDFAPVEKGETLVFEVGSREQSISVHVKDDGIPETDEPFYIVLFNSTGDTVVYEYGVATVIIEANDDPNGVFSLEPIDKAVEEGKTNAFWILRHRGHFGNVSVAWQLFQNASLQPGQEFYETSGTVNFTDGEETKPVILRAFPDRIPEFNEFYILRLVNISGPGGQLAETNFQVTVMIPFNDDPFGIFILDPECLEREVAEDVLSEDDMSYITSFTILRQQGVFGDVRVGWEVLSREFTAGLPPMIDFILLGSFPSTVPLQPHMRRHHSGTDVLYFSGLEGAFGTVDPKYQPFRNNTIANFTFSAWVMPNANTNGFLIAKDDSHGSIYYGVKIQTNETHVTLSLHYKTFGSNVTYIAKSTVMKYLEEGVWLHVLIILDDGIIEFYLDGKAMPRGIKSLKGEAITDGPGILRIGAGMDGGARFTGWMQDVRTYERKLTPEEIYELHAVPARTDLHPISGYLEFRQGESNKSFIVAARDDSEEEGEELFLLKLVSVDGGAQISKENTTARLRIQKSDNANGLFGFTGACIPEMTEEGSTVSCVVERTRGALGYVHVFYTISQIESEGINYLVDDFANASGTITFLPWQRSEVLNLYVLDEDMPELNEYFRVTLVSAVPGDGKLGSTPISGASIDPEKETTGITVKASDHPYGLMQFSTGLPPQPEDSMSLPASSVPHITVQEEDGEIRLLVIRAQGLLGRVTVGFRTVSLTAFSPEDYQSTAGTLEFQSGERYKYIFVNITDNSIPELEKSFKVELLNLDGGVSDLFRVDGSGSGEADTDFFLPPVLPHASLGVASQILVTIAASDHAHGVFEFSPESLFVSGTEPEDGYSTVVLNVTRTRGALSAVTLQWKVDSDLDGDLAITSGNITFETGQRIASITVEILSDEEPELDKALTVSILNVSSGSLGVLTNATLTILASDDPYGVFIFPNKTRPLSVEEATQNVALSIIRLKGLMGEVAVSYATIDDMEKPPYFPPNLARATQGGDYISASGLALFRVNQTEATITISILDDAEPERSESVFIELFNSSLVDKVQNRPIPHSPRLGPKVETVAHLVIVANDDAFGTVQLSATSVHVAENHVGPIINVTRTGGTFADVSVKFKAVPITAAAGEDYSIASSDVVLLEGETTKAVPIYIINDIYPELEETFLVQLLNETTGGATLGPLREAVITIEASDDPYGLFGFQNTKFIVEEPEFNSVRVNVPIIRNSGTLGNVTVQWVAIINGQFATGDLRVVSGNVTFAPGETIQTLLLEVLADDVPEIEEVVQVQLAAASGGGTIGLDRVANIVIPANDNPYGSVAFVQSVFRVQEPLERSSYANITVRRSGGHFGRLLLCYGTSDIDVVARAVEEGEDVLSYYESPTQGVPDPLWRTWVNVSAVEETQYTCATLCLKERACSAFSVVSGAEGPRCFWMTSWVSGTVNSSDFQTYKKNMTRVASLFSGQAVAGSDYEPVTRQWAVILEGDEFANLTVSVLPDDAPEMDESFLISLLEVHLMNISDSFKNQPTIGHPNTSAVVIGLNGDAFGVFIIYSVSPNTSEDGLCVEVQEQPQTSVELVIYRTGGSLGQVMVEWRVVGGTATEGLDFMGAGDILTFAEGETKKMAILTILDDSEPEDNESILVRLGATEGGSRILPSSDTVTVNILANDNVAGIVSFQTASRSVIGHEGEMLQFHVVRTPPGRGNVTVNWKVVGQNLEVNFANFTGQLFFSEGTLNKTIFVHLLDDNIPEEKEVYQVVLYDVKTQGVSPAGVALLDAQGYAAVLTVEASDEPHGVLNFALSSRFVVLQEANVTIQLFVNREFGSLGAINVTYATVPGIVSLKNNTEGNLAEPESDFIPVVGSLVLEEGETTAAISITVLEDDIPELKEYFLVNLTHVDLIMAPLTSSPPRLDSEGLTAQIVIDANDGAQGMIEWQRNRFEVNETDGVVTLVAQRSRAALGQVSLFMYAQNLEAQAGLDYMRTPQILHFTDGERFKHVDVMILDDDMPEGDERFQLLLTNPSPGLELGKNTIALITVLANDDGPGVLSFNNSGHIFLREPTSLYVQESVAVLVIVREPAQGLFGTVAVQFVVTEVNSSTESKDLSPSKGFIVLEEGVRSKTLRISAILDTEPEMDEHFVCTLFNPTGGARLGAHVQTLITIFQNQAPLGLFSISAVENSATSIDVEESNRSVYLNVSRTNGLDLTASVQWETVSETAFGMRGMDVVFSIFQSFFDKTALDWCFFTVEGSVYGVMLRKSSLVVYRWQGTFVPVEDLKVESPKTCEAFNIGVSPYLVITHGERSGEKPSINSVYMLTAGFRLVLIQTIIISGSCQVRHFTSDSQDYFIIASRRNDSELTQVFRWNGNNFAWHQTLPVRGVLGMALFSRGGSVFLAISQANIRQTSLLFTWSGTQFINFQELPISGITQVEALSSGDDVYLCFAKNTFLGNQNAIDIFVWEMGHSSLRYFQSLDFAAVKRIRSFTPASGIVHILLTAQDGSALYCWNSELNAFSFVLEAPAAHDAAFVTVKSLNSSKTLIALVGATDSHLYELTYVSSQSDFIPSLGELIFEPGDKEAIIAVNVLDDTVPEKEESFRVQLKSPRGGAEIGINSSVRVTVLANDGAYGVVAFAQNSLHKQLEELERDSLVTLNVERLRGTHGRITVAWEAAGSVSDVFPTSGVISFTEDQAMSMITLTVLADDLPELSEAVVVTLTQIVTEGVEDPLKGATIDQSRSRSVLTILPSDSPYGAVRWHTESLFNRVPEPTENITVVQLHIVRDKGLFGDISIHLIAKPNFLLHINNQATEDEDFVLQDSVIIMKENIKETHAEVAILPDEVPELDEGLIVTIAAVNLVNPNFPAEQPRVQRPRMESAEILIEENDDPRGIFNFHVVRDVGGVIIAHEGPPPLNVLQVPVVRMAGTFETVNVYWKATPDSAGLEDFQPSHGMLQFADGQVIAPILVTIIDDSEFELLETFTISLVSVTGGGRLGDDVSVNVVIAPNDSPFGIFGFEKKTVMVDGPLLSDDPDSYVTLTVVRSPGGKGAVRLHWAIEEKAKDDLSPLNGTLYFDETESQKSVILHTLKDGMVGEDRRFIIELTAADEVEISPVKGSASVIIRGDKSISEVGIASSSRHIIIGEPSATYNGTAIIDLVRGPGVSGEITVNWKILPPSRGEFVETSGQLTMLDGQTAATVVIQVLNDDIPEEKCHYEFQLTEISEGRMLHEASVSARITMVASDAPYGRFSFSHEQLHVSKAAQRVNVTVVRSGGSFGRARVLYETGSRTAEAGWDFVPASGELLFEAREKMKSLYIDILDDDLPEGPEEFVLAITRVDLQGRGYDFTIQENGLQIDQPPEIGNISIVRIIIMKNDNAEGIIEFDPKYTDISVEEDAGVITLPVLRLHGTYGHVSADFSSRGFSAVPGGYVLRGSSVTFQHGQNLSFINVSIIDDNGSEFEKQFEILLIGATGGAILGRHLVSKITIAKSDSPFGIIRFLNQSKISLPNPSSTMALHLVLERTGGLLGEIQVSWEVVGPDAEEPLPPHNGDFADPVSGTVSFGDGEGGVRSIILRVCPHEETEAEETFIVQLKPLREAKLDPRAKAVTLTIQKFGDPNGVIHFAPESLSKRRFSEPPPSDGPLLVSFLVTRSKGTSGDIKVHWELSSEFDITRDFLSTRGFFTIADGESDANFDVHLLPDDVPEIEEEYAVQLVSVEGGAELDLGKCTARFSVSANDDPHGVFALYSDRQSVLIGQNLDRSIQINITRLAGAFGAVAVRVQILSDNKEDPVATENEERQLVITDGARYKVGLVPLKNQVFLSLGSNFTLQLVSVRLLSGPFYGIPTILQEAKNAILSVPEEAANSQVGFESAAFQLMDIKAGTSQVMVSRKGTYGRLSVAWTTGYAPGSEIPEPIVIGNMTPTLGSLSFVHGEERKGVLLWTFPSPGRPEAFVLHLSGLRSSAAGGAQLRSGFTTAEIEPMGVFQFSPSSRNITVSEDAQTIRICVQRLFGFHGDLIKVSYETTAGSAKPPEDFEAVQKGEVFFQRFQPEIDFEITIINDQLPEIEETYYINLTSVETRGLGKGGVNWRPRLNPDLSVAVVTIVDNDDLTGAAVSVPVTAGTVAVDSTLLAMETGSTTHPNKSKITTIPYTTEVFAPVTETVTVSAIPEKLATAHSVISVKPDVVPGTVVASVYGTLSIGPPIVYVSEEMKNGTLSTADILIQRMGGFAGNVTITVKTFGGRCAQKEPSVWPFQDVYGVGNLTTWAVEEEDFEEQLLTLTFLYGERERKIAVQILDDDDAEGQEFFYVFLTDPQGGAEIVRGKDSTGFSAFAVIIISGSDLHNGIIGFSEESQRGLELREGADKNSQRLVVTRQPNRAFEEVQIFWRVTLNQTVTILQEKGANLTDELRFVAGVTTCTGGQTRCFIHLELNPKKVHQVEMPFFVELYDVTAGAAINNSARFAPIKLSKSGAPQSLVSFSVGSRLAVAHKKSTLISLQVARDSGTGIMMSVNFITQELRSAETVGRVLISPAVSGKDFVRTEGTLVFEPGQKSAVLDVVLTPEAGSLNKFPKRFQIVLFDPKGGARIDKVYGTANITLISDADSQAVWGLEDLLHRPLHEDILNRVLHNLNLRVATESTDEQLSAVMLIMEKITMEGRNQAFSIKSRTLLYELLCVLINPKRKDTRGFSHFVEVAEHFAFSLLTDVTCGSPGEKSKTILDSCPYLSILALHWNPQQINGHKFEGKEGDYIQIPERLLDVPEAEMLDGKNACTLVQFVEYSSQQWFIAGDNLPALKDKVLSLNVKGQSAQPLPNNNEVLYRIHAAEPRVVPHTSRCLLWNQAAASWLSDSQFCKVVEDASDYVECACSHMSVYAVYAQTDNSSSYNEAFFSAGLICISGLCLAVVSHMFCARHSMFAAKLLTHMMVASLGTQILFLASAYASPHLSEESCSAVAAVAHYLYLCQFSWMLIQSVNFWYVLVVSDEHTERRCLLFCLLSWGLPSFVVILLILILRGIYHRSMPQIYGLIHGDLCFIPNIYAALFTAALVPLMCLVVVFVVFIHAYQLKPQWKGYDDVFRGRTNAAEIPLILYLFALISMTWLWGGLHMAYGHFWMLVLFVIFNSLQGLYVFVVYFILHNQTCCPMKASYTVEMNGHPGPSTAFFTPGSGIPPAGEINKSTQNLINAMEEVPSDWERSSFQQTSQASPDLKTSPQNGASFPSSGGYGPGSLIADEESQEFDDLIFALKTGAGLSVSDNESGQGSQEGGTLTDSQIVELRRIPIADTHL</sequence>
<name>AGRV1_MOUSE</name>
<reference key="1">
    <citation type="journal article" date="2001" name="Neuron">
        <title>A novel gene causing a Mendelian audiogenic mouse epilepsy.</title>
        <authorList>
            <person name="Skradski S.L."/>
            <person name="Clark A.M."/>
            <person name="Jiang H."/>
            <person name="White H.S."/>
            <person name="Fu Y."/>
            <person name="Ptacek L.J."/>
        </authorList>
    </citation>
    <scope>NUCLEOTIDE SEQUENCE [MRNA] (ISOFORMS 2 AND 3)</scope>
    <scope>INVOLVEMENT IN MONOGENIC AUDIOGENIC SEIZURE SUSCEPTIBILITY</scope>
    <source>
        <strain>C57BL/6J</strain>
    </source>
</reference>
<reference key="2">
    <citation type="journal article" date="2002" name="J. Biol. Chem.">
        <title>Very large G protein-coupled receptor-1, the largest known cell surface protein, is highly expressed in the developing central nervous system.</title>
        <authorList>
            <person name="McMillan D.R."/>
            <person name="Kayes-Wandover K.M."/>
            <person name="Richardson J.A."/>
            <person name="White P.C."/>
        </authorList>
    </citation>
    <scope>NUCLEOTIDE SEQUENCE [MRNA] (ISOFORM 1)</scope>
    <scope>DEVELOPMENTAL STAGE</scope>
    <source>
        <strain>129/Sv</strain>
    </source>
</reference>
<reference key="3">
    <citation type="journal article" date="2005" name="J. Neurochem.">
        <title>Vlgr1 knockout mice show audiogenic seizure susceptibility.</title>
        <authorList>
            <person name="Yagi H."/>
            <person name="Takamura Y."/>
            <person name="Yoneda T."/>
            <person name="Konno D."/>
            <person name="Akagi Y."/>
            <person name="Yoshida K."/>
            <person name="Sato M."/>
        </authorList>
    </citation>
    <scope>NUCLEOTIDE SEQUENCE [MRNA] (ISOFORMS 4 AND 5)</scope>
    <scope>DISRUPTION PHENOTYPE</scope>
    <scope>SUBCELLULAR LOCATION</scope>
</reference>
<reference key="4">
    <citation type="journal article" date="2003" name="DNA Res.">
        <title>Prediction of the coding sequences of mouse homologues of KIAA gene: III. The complete nucleotide sequences of 500 mouse KIAA-homologous cDNAs identified by screening of terminal sequences of cDNA clones randomly sampled from size-fractionated libraries.</title>
        <authorList>
            <person name="Okazaki N."/>
            <person name="Kikuno R."/>
            <person name="Ohara R."/>
            <person name="Inamoto S."/>
            <person name="Koseki H."/>
            <person name="Hiraoka S."/>
            <person name="Saga Y."/>
            <person name="Nagase T."/>
            <person name="Ohara O."/>
            <person name="Koga H."/>
        </authorList>
    </citation>
    <scope>NUCLEOTIDE SEQUENCE [LARGE SCALE MRNA] OF 4816-6298</scope>
    <source>
        <tissue>Pancreatic islet</tissue>
    </source>
</reference>
<reference key="5">
    <citation type="submission" date="2004-06" db="EMBL/GenBank/DDBJ databases">
        <authorList>
            <person name="Okazaki N."/>
            <person name="Kikuno R."/>
            <person name="Nagase T."/>
            <person name="Ohara O."/>
            <person name="Koga H."/>
        </authorList>
    </citation>
    <scope>SEQUENCE REVISION</scope>
</reference>
<reference key="6">
    <citation type="journal article" date="2006" name="J. Neurosci.">
        <title>The very large G-protein-coupled receptor VLGR1: a component of the ankle link complex required for the normal development of auditory hair bundles.</title>
        <authorList>
            <person name="McGee J."/>
            <person name="Goodyear R.J."/>
            <person name="McMillan D.R."/>
            <person name="Stauffer E.A."/>
            <person name="Holt J.R."/>
            <person name="Locke K.G."/>
            <person name="Birch D.G."/>
            <person name="Legan P.K."/>
            <person name="White P.C."/>
            <person name="Walsh E.J."/>
            <person name="Richardson G.P."/>
        </authorList>
    </citation>
    <scope>FUNCTION</scope>
    <scope>SUBCELLULAR LOCATION</scope>
    <scope>TISSUE SPECIFICITY</scope>
    <scope>DEVELOPMENTAL STAGE</scope>
    <scope>DOMAIN</scope>
</reference>
<reference key="7">
    <citation type="journal article" date="2007" name="J. Neurosci.">
        <title>A forward genetics screen in mice identifies recessive deafness traits and reveals that pejvakin is essential for outer hair cell function.</title>
        <authorList>
            <person name="Schwander M."/>
            <person name="Sczaniecka A."/>
            <person name="Grillet N."/>
            <person name="Bailey J.S."/>
            <person name="Avenarius M."/>
            <person name="Najmabadi H."/>
            <person name="Steffy B.M."/>
            <person name="Federe G.C."/>
            <person name="Lagler E.A."/>
            <person name="Banan R."/>
            <person name="Hice R."/>
            <person name="Grabowski-Boase L."/>
            <person name="Keithley E.M."/>
            <person name="Ryan A.F."/>
            <person name="Housley G.D."/>
            <person name="Wiltshire T."/>
            <person name="Smith R.J."/>
            <person name="Tarantino L.M."/>
            <person name="Mueller U."/>
        </authorList>
    </citation>
    <scope>DISRUPTION PHENOTYPE</scope>
</reference>
<reference key="8">
    <citation type="journal article" date="2007" name="J. Neurosci.">
        <title>Molecular characterization of the ankle-link complex in cochlear hair cells and its role in the hair bundle functioning.</title>
        <authorList>
            <person name="Michalski N."/>
            <person name="Michel V."/>
            <person name="Bahloul A."/>
            <person name="Lefevre G."/>
            <person name="Barral J."/>
            <person name="Yagi H."/>
            <person name="Chardenoux S."/>
            <person name="Weil D."/>
            <person name="Martin P."/>
            <person name="Hardelin J.P."/>
            <person name="Sato M."/>
            <person name="Petit C."/>
        </authorList>
    </citation>
    <scope>FUNCTION</scope>
    <scope>TISSUE SPECIFICITY</scope>
    <scope>DEVELOPMENTAL STAGE</scope>
    <scope>SUBCELLULAR LOCATION</scope>
    <scope>INTERACTION WITH MYO7A</scope>
</reference>
<reference key="9">
    <citation type="journal article" date="2010" name="PLoS Genet.">
        <title>Ablation of whirlin long isoform disrupts the USH2 protein complex and causes vision and hearing loss.</title>
        <authorList>
            <person name="Yang J."/>
            <person name="Liu X."/>
            <person name="Zhao Y."/>
            <person name="Adamian M."/>
            <person name="Pawlyk B."/>
            <person name="Sun X."/>
            <person name="McMillan D.R."/>
            <person name="Liberman M.C."/>
            <person name="Li T."/>
        </authorList>
    </citation>
    <scope>FUNCTION</scope>
    <scope>SUBCELLULAR LOCATION</scope>
    <scope>TISSUE SPECIFICITY</scope>
    <scope>IDENTIFICATION IN THE USH2 COMPLEX</scope>
</reference>
<reference key="10">
    <citation type="journal article" date="2012" name="J. Clin. Endocrinol. Metab.">
        <title>GPR98/Gpr98 gene is involved in the regulation of human and mouse bone mineral density.</title>
        <authorList>
            <person name="Urano T."/>
            <person name="Shiraki M."/>
            <person name="Yagi H."/>
            <person name="Ito M."/>
            <person name="Sasaki N."/>
            <person name="Sato M."/>
            <person name="Ouchi Y."/>
            <person name="Inoue S."/>
        </authorList>
    </citation>
    <scope>FUNCTION</scope>
    <scope>DISRUPTION PHENOTYPE</scope>
</reference>
<reference key="11">
    <citation type="journal article" date="2012" name="J. Neurosci.">
        <title>Localization of PDZD7 to the stereocilia ankle-link associates this scaffolding protein with the Usher syndrome protein network.</title>
        <authorList>
            <person name="Grati M."/>
            <person name="Shin J.B."/>
            <person name="Weston M.D."/>
            <person name="Green J."/>
            <person name="Bhat M.A."/>
            <person name="Gillespie P.G."/>
            <person name="Kachar B."/>
        </authorList>
    </citation>
    <scope>INTERACTION WITH PDZD7 AND WHRN</scope>
</reference>
<reference key="12">
    <citation type="journal article" date="2013" name="Proc. Natl. Acad. Sci. U.S.A.">
        <title>Very large G protein-coupled receptor 1 regulates myelin-associated glycoprotein via Galphas/Galphaq-mediated protein kinases A/C.</title>
        <authorList>
            <person name="Shin D."/>
            <person name="Lin S.T."/>
            <person name="Fu Y.H."/>
            <person name="Ptacek L.J."/>
        </authorList>
    </citation>
    <scope>FUNCTION</scope>
    <scope>TISSUE SPECIFICITY</scope>
</reference>
<reference key="13">
    <citation type="journal article" date="2014" name="J. Biol. Chem.">
        <title>Constitutive Galphai coupling activity of very large G protein-coupled receptor 1 (VLGR1) and its regulation by PDZD7 protein.</title>
        <authorList>
            <person name="Hu Q.X."/>
            <person name="Dong J.H."/>
            <person name="Du H.B."/>
            <person name="Zhang D.L."/>
            <person name="Ren H.Z."/>
            <person name="Ma M.L."/>
            <person name="Cai Y."/>
            <person name="Zhao T.C."/>
            <person name="Yin X.L."/>
            <person name="Yu X."/>
            <person name="Xue T."/>
            <person name="Xu Z.G."/>
            <person name="Sun J.P."/>
        </authorList>
    </citation>
    <scope>FUNCTION</scope>
    <scope>PROTEOLYTIC CLEAVAGE</scope>
    <scope>SUBUNIT</scope>
    <scope>MUTAGENESIS OF HIS-5882; SER-5884 AND ARG-6002</scope>
    <scope>INTERACTION WITH PDZD7</scope>
</reference>
<reference key="14">
    <citation type="journal article" date="2014" name="J. Biol. Chem.">
        <title>Whirlin and PDZ domain-containing 7 (PDZD7) proteins are both required to form the quaternary protein complex associated with Usher syndrome type 2.</title>
        <authorList>
            <person name="Chen Q."/>
            <person name="Zou J."/>
            <person name="Shen Z."/>
            <person name="Zhang W."/>
            <person name="Yang J."/>
        </authorList>
    </citation>
    <scope>IDENTIFICATION IN THE USH2 COMPLEX</scope>
</reference>
<reference key="15">
    <citation type="journal article" date="2014" name="Hum. Mol. Genet.">
        <title>Deletion of PDZD7 disrupts the Usher syndrome type 2 protein complex in cochlear hair cells and causes hearing loss in mice.</title>
        <authorList>
            <person name="Zou J."/>
            <person name="Zheng T."/>
            <person name="Ren C."/>
            <person name="Askew C."/>
            <person name="Liu X.P."/>
            <person name="Pan B."/>
            <person name="Holt J.R."/>
            <person name="Wang Y."/>
            <person name="Yang J."/>
        </authorList>
    </citation>
    <scope>SUBCELLULAR LOCATION</scope>
    <source>
        <strain>C57BL/6J</strain>
        <tissue>Retina</tissue>
    </source>
</reference>
<reference key="16">
    <citation type="journal article" date="2016" name="Elife">
        <title>PDZD7-MYO7A complex identified in enriched stereocilia membranes.</title>
        <authorList>
            <person name="Morgan C.P."/>
            <person name="Krey J.F."/>
            <person name="Grati M."/>
            <person name="Zhao B."/>
            <person name="Fallen S."/>
            <person name="Kannan-Sundhari A."/>
            <person name="Liu X.Z."/>
            <person name="Choi D."/>
            <person name="Mueller U."/>
            <person name="Barr-Gillespie P.G."/>
        </authorList>
    </citation>
    <scope>SUBCELLULAR LOCATION</scope>
</reference>
<feature type="signal peptide" evidence="1">
    <location>
        <begin position="1"/>
        <end position="28"/>
    </location>
</feature>
<feature type="chain" id="PRO_0000232736" description="Adhesion G-protein coupled receptor V1">
    <location>
        <begin position="29"/>
        <end position="6298"/>
    </location>
</feature>
<feature type="chain" id="PRO_0000445733" description="ADGRV1 subunit alpha" evidence="24">
    <location>
        <begin position="29"/>
        <end position="5883"/>
    </location>
</feature>
<feature type="chain" id="PRO_0000445734" description="ADGRV1 subunit beta" evidence="24">
    <location>
        <begin position="5884"/>
        <end position="6298"/>
    </location>
</feature>
<feature type="topological domain" description="Extracellular" evidence="1">
    <location>
        <begin position="29"/>
        <end position="5901"/>
    </location>
</feature>
<feature type="transmembrane region" description="Helical; Name=1" evidence="1">
    <location>
        <begin position="5902"/>
        <end position="5922"/>
    </location>
</feature>
<feature type="topological domain" description="Cytoplasmic" evidence="1">
    <location>
        <begin position="5923"/>
        <end position="5932"/>
    </location>
</feature>
<feature type="transmembrane region" description="Helical; Name=2" evidence="1">
    <location>
        <begin position="5933"/>
        <end position="5953"/>
    </location>
</feature>
<feature type="topological domain" description="Extracellular" evidence="1">
    <location>
        <begin position="5954"/>
        <end position="5973"/>
    </location>
</feature>
<feature type="transmembrane region" description="Helical; Name=3" evidence="1">
    <location>
        <begin position="5974"/>
        <end position="5994"/>
    </location>
</feature>
<feature type="topological domain" description="Cytoplasmic" evidence="1">
    <location>
        <begin position="5995"/>
        <end position="6003"/>
    </location>
</feature>
<feature type="transmembrane region" description="Helical; Name=4" evidence="1">
    <location>
        <begin position="6004"/>
        <end position="6024"/>
    </location>
</feature>
<feature type="topological domain" description="Extracellular" evidence="1">
    <location>
        <begin position="6025"/>
        <end position="6052"/>
    </location>
</feature>
<feature type="transmembrane region" description="Helical; Name=5" evidence="1">
    <location>
        <begin position="6053"/>
        <end position="6073"/>
    </location>
</feature>
<feature type="topological domain" description="Cytoplasmic" evidence="1">
    <location>
        <begin position="6074"/>
        <end position="6097"/>
    </location>
</feature>
<feature type="transmembrane region" description="Helical; Name=6" evidence="1">
    <location>
        <begin position="6098"/>
        <end position="6118"/>
    </location>
</feature>
<feature type="topological domain" description="Extracellular" evidence="1">
    <location>
        <begin position="6119"/>
        <end position="6126"/>
    </location>
</feature>
<feature type="transmembrane region" description="Helical; Name=7" evidence="1">
    <location>
        <begin position="6127"/>
        <end position="6147"/>
    </location>
</feature>
<feature type="topological domain" description="Cytoplasmic" evidence="1">
    <location>
        <begin position="6148"/>
        <end position="6298"/>
    </location>
</feature>
<feature type="domain" description="Calx-beta 1" evidence="1">
    <location>
        <begin position="29"/>
        <end position="116"/>
    </location>
</feature>
<feature type="domain" description="Calx-beta 2" evidence="1">
    <location>
        <begin position="132"/>
        <end position="236"/>
    </location>
</feature>
<feature type="domain" description="Calx-beta 3" evidence="1">
    <location>
        <begin position="251"/>
        <end position="362"/>
    </location>
</feature>
<feature type="domain" description="Calx-beta 4" evidence="25">
    <location>
        <begin position="389"/>
        <end position="489"/>
    </location>
</feature>
<feature type="domain" description="Calx-beta 5" evidence="25">
    <location>
        <begin position="646"/>
        <end position="746"/>
    </location>
</feature>
<feature type="domain" description="Calx-beta 6" evidence="1">
    <location>
        <begin position="764"/>
        <end position="862"/>
    </location>
</feature>
<feature type="domain" description="Calx-beta 7" evidence="1">
    <location>
        <begin position="877"/>
        <end position="980"/>
    </location>
</feature>
<feature type="domain" description="Calx-beta 8" evidence="1">
    <location>
        <begin position="994"/>
        <end position="1094"/>
    </location>
</feature>
<feature type="domain" description="Calx-beta 9" evidence="25">
    <location>
        <begin position="1108"/>
        <end position="1208"/>
    </location>
</feature>
<feature type="domain" description="Calx-beta 10" evidence="25">
    <location>
        <begin position="1440"/>
        <end position="1540"/>
    </location>
</feature>
<feature type="domain" description="Calx-beta 11" evidence="25">
    <location>
        <begin position="1562"/>
        <end position="1662"/>
    </location>
</feature>
<feature type="domain" description="Calx-beta 12" evidence="1">
    <location>
        <begin position="1706"/>
        <end position="1805"/>
    </location>
</feature>
<feature type="domain" description="Calx-beta 13" evidence="1">
    <location>
        <begin position="1846"/>
        <end position="1948"/>
    </location>
</feature>
<feature type="domain" description="Calx-beta 14" evidence="1">
    <location>
        <begin position="1962"/>
        <end position="2075"/>
    </location>
</feature>
<feature type="domain" description="Calx-beta 15" evidence="1">
    <location>
        <begin position="2103"/>
        <end position="2202"/>
    </location>
</feature>
<feature type="domain" description="Calx-beta 16" evidence="1">
    <location>
        <begin position="2218"/>
        <end position="2320"/>
    </location>
</feature>
<feature type="domain" description="Calx-beta 17" evidence="25">
    <location>
        <begin position="2437"/>
        <end position="2537"/>
    </location>
</feature>
<feature type="domain" description="Calx-beta 18" evidence="1">
    <location>
        <begin position="2576"/>
        <end position="2672"/>
    </location>
</feature>
<feature type="domain" description="Calx-beta 19" evidence="1">
    <location>
        <begin position="2687"/>
        <end position="2786"/>
    </location>
</feature>
<feature type="domain" description="Calx-beta 20" evidence="1">
    <location>
        <begin position="2810"/>
        <end position="2921"/>
    </location>
</feature>
<feature type="domain" description="Calx-beta 21" evidence="1">
    <location>
        <begin position="2945"/>
        <end position="3044"/>
    </location>
</feature>
<feature type="domain" description="Calx-beta 22" evidence="25">
    <location>
        <begin position="3067"/>
        <end position="3167"/>
    </location>
</feature>
<feature type="repeat" description="EAR 1" evidence="2">
    <location>
        <begin position="3251"/>
        <end position="3292"/>
    </location>
</feature>
<feature type="repeat" description="EAR 2" evidence="2">
    <location>
        <begin position="3293"/>
        <end position="3341"/>
    </location>
</feature>
<feature type="repeat" description="EAR 3" evidence="2">
    <location>
        <begin position="3344"/>
        <end position="3389"/>
    </location>
</feature>
<feature type="repeat" description="EAR 4" evidence="2">
    <location>
        <begin position="3391"/>
        <end position="3435"/>
    </location>
</feature>
<feature type="repeat" description="EAR 5" evidence="2">
    <location>
        <begin position="3437"/>
        <end position="3484"/>
    </location>
</feature>
<feature type="repeat" description="EAR 6" evidence="2">
    <location>
        <begin position="3488"/>
        <end position="3530"/>
    </location>
</feature>
<feature type="domain" description="Calx-beta 23" evidence="1">
    <location>
        <begin position="3581"/>
        <end position="3622"/>
    </location>
</feature>
<feature type="domain" description="Calx-beta 24" evidence="25">
    <location>
        <begin position="3636"/>
        <end position="3736"/>
    </location>
</feature>
<feature type="domain" description="Calx-beta 25" evidence="25">
    <location>
        <begin position="3772"/>
        <end position="3872"/>
    </location>
</feature>
<feature type="domain" description="Calx-beta 26" evidence="1">
    <location>
        <begin position="3919"/>
        <end position="4003"/>
    </location>
</feature>
<feature type="domain" description="Calx-beta 27" evidence="1">
    <location>
        <begin position="4017"/>
        <end position="4120"/>
    </location>
</feature>
<feature type="domain" description="Calx-beta 28" evidence="25">
    <location>
        <begin position="4135"/>
        <end position="4235"/>
    </location>
</feature>
<feature type="domain" description="Calx-beta 29" evidence="1">
    <location>
        <begin position="4251"/>
        <end position="4351"/>
    </location>
</feature>
<feature type="domain" description="Calx-beta 30" evidence="1">
    <location>
        <begin position="4384"/>
        <end position="4484"/>
    </location>
</feature>
<feature type="domain" description="Calx-beta 31" evidence="25">
    <location>
        <begin position="4507"/>
        <end position="4607"/>
    </location>
</feature>
<feature type="domain" description="Calx-beta 32" evidence="25">
    <location>
        <begin position="4628"/>
        <end position="4728"/>
    </location>
</feature>
<feature type="domain" description="Calx-beta 33" evidence="1">
    <location>
        <begin position="4989"/>
        <end position="5089"/>
    </location>
</feature>
<feature type="domain" description="Calx-beta 34" evidence="1">
    <location>
        <begin position="5281"/>
        <end position="5325"/>
    </location>
</feature>
<feature type="domain" description="Calx-beta 35" evidence="25">
    <location>
        <begin position="5361"/>
        <end position="5461"/>
    </location>
</feature>
<feature type="domain" description="GAIN-B" evidence="3">
    <location>
        <begin position="5740"/>
        <end position="5896"/>
    </location>
</feature>
<feature type="region of interest" description="GPS" evidence="3">
    <location>
        <begin position="5849"/>
        <end position="5896"/>
    </location>
</feature>
<feature type="region of interest" description="Disordered" evidence="4">
    <location>
        <begin position="6206"/>
        <end position="6242"/>
    </location>
</feature>
<feature type="region of interest" description="Disordered" evidence="4">
    <location>
        <begin position="6264"/>
        <end position="6283"/>
    </location>
</feature>
<feature type="compositionally biased region" description="Polar residues" evidence="4">
    <location>
        <begin position="6208"/>
        <end position="6226"/>
    </location>
</feature>
<feature type="compositionally biased region" description="Polar residues" evidence="4">
    <location>
        <begin position="6265"/>
        <end position="6283"/>
    </location>
</feature>
<feature type="site" description="Cleavage; by autolysis" evidence="3 15">
    <location>
        <begin position="5883"/>
        <end position="5884"/>
    </location>
</feature>
<feature type="disulfide bond" evidence="3">
    <location>
        <begin position="5849"/>
        <end position="5878"/>
    </location>
</feature>
<feature type="disulfide bond" evidence="3">
    <location>
        <begin position="5866"/>
        <end position="5880"/>
    </location>
</feature>
<feature type="splice variant" id="VSP_017951" description="In isoform 3." evidence="18">
    <location>
        <begin position="1"/>
        <end position="1804"/>
    </location>
</feature>
<feature type="splice variant" id="VSP_017952" description="In isoform 2." evidence="18">
    <location>
        <begin position="1"/>
        <end position="720"/>
    </location>
</feature>
<feature type="splice variant" id="VSP_017953" description="In isoform 5." evidence="19">
    <original>LE</original>
    <variation>VL</variation>
    <location>
        <begin position="615"/>
        <end position="616"/>
    </location>
</feature>
<feature type="splice variant" id="VSP_017954" description="In isoform 5." evidence="19">
    <location>
        <begin position="617"/>
        <end position="6298"/>
    </location>
</feature>
<feature type="splice variant" id="VSP_017955" description="In isoform 2." evidence="18">
    <original>QNETSINITVKGDDIPELNETVTLSLDR</original>
    <variation>MCLPSLCPSHCSFCVDRVETERFVVYFG</variation>
    <location>
        <begin position="721"/>
        <end position="748"/>
    </location>
</feature>
<feature type="splice variant" id="VSP_017956" description="In isoform 4." evidence="19">
    <original>PGGQLA</original>
    <variation>TNLSHL</variation>
    <location>
        <begin position="1213"/>
        <end position="1218"/>
    </location>
</feature>
<feature type="splice variant" id="VSP_017957" description="In isoform 4." evidence="19">
    <location>
        <begin position="1219"/>
        <end position="6298"/>
    </location>
</feature>
<feature type="splice variant" id="VSP_017958" description="In isoform 3." evidence="18">
    <original>LNLDGG</original>
    <variation>MCVACE</variation>
    <location>
        <begin position="1805"/>
        <end position="1810"/>
    </location>
</feature>
<feature type="splice variant" id="VSP_017959" description="In isoform 2 and isoform 3." evidence="18">
    <original>DSEGLTAQIVIDANDGAQGMI</original>
    <variation>GMGLSFMNLLTNCESQRTSLF</variation>
    <location>
        <begin position="2938"/>
        <end position="2958"/>
    </location>
</feature>
<feature type="splice variant" id="VSP_017960" description="In isoform 2 and isoform 3." evidence="18">
    <location>
        <begin position="2959"/>
        <end position="6298"/>
    </location>
</feature>
<feature type="mutagenesis site" description="Reduces autoproteolysis. No effect on inhibition of adenylate cyclase activity." evidence="15">
    <original>H</original>
    <variation>A</variation>
    <location>
        <position position="5882"/>
    </location>
</feature>
<feature type="mutagenesis site" description="Abolishes autoproteolysis. No effect on inhibition of adenylate cyclase activity." evidence="15">
    <original>S</original>
    <variation>A</variation>
    <location>
        <position position="5884"/>
    </location>
</feature>
<feature type="mutagenesis site" description="Abolishes coupling to G(i)-proteins. Abolishes inhibition of adenylate cyclase activity. No effect on interaction with PDZD7." evidence="15">
    <original>R</original>
    <variation>A</variation>
    <location>
        <position position="6002"/>
    </location>
</feature>
<feature type="sequence conflict" description="In Ref. 3." evidence="25" ref="3">
    <original>SSRFE</original>
    <variation>RYNLL</variation>
    <location>
        <begin position="412"/>
        <end position="416"/>
    </location>
</feature>
<feature type="sequence conflict" description="In Ref. 3; BAC66506." evidence="25" ref="3">
    <original>A</original>
    <variation>S</variation>
    <location>
        <position position="520"/>
    </location>
</feature>
<feature type="sequence conflict" description="In Ref. 1." evidence="25" ref="1">
    <original>V</original>
    <variation>A</variation>
    <location>
        <position position="859"/>
    </location>
</feature>
<feature type="sequence conflict" description="In Ref. 3; BAC66506." evidence="25" ref="3">
    <original>R</original>
    <variation>C</variation>
    <location>
        <position position="873"/>
    </location>
</feature>
<feature type="sequence conflict" description="In Ref. 3; BAC66506." evidence="25" ref="3">
    <original>S</original>
    <variation>T</variation>
    <location>
        <position position="963"/>
    </location>
</feature>
<feature type="sequence conflict" description="In Ref. 1." evidence="25" ref="1">
    <original>E</original>
    <variation>K</variation>
    <location>
        <position position="1282"/>
    </location>
</feature>
<feature type="sequence conflict" description="In Ref. 1." evidence="25" ref="1">
    <original>G</original>
    <variation>E</variation>
    <location>
        <position position="1508"/>
    </location>
</feature>
<feature type="sequence conflict" description="In Ref. 1." evidence="25" ref="1">
    <original>S</original>
    <variation>P</variation>
    <location>
        <position position="1933"/>
    </location>
</feature>
<feature type="sequence conflict" description="In Ref. 1." evidence="25" ref="1">
    <original>L</original>
    <variation>M</variation>
    <location>
        <position position="1955"/>
    </location>
</feature>
<feature type="sequence conflict" description="In Ref. 1." evidence="25" ref="1">
    <original>A</original>
    <variation>T</variation>
    <location>
        <position position="1994"/>
    </location>
</feature>
<feature type="sequence conflict" description="In Ref. 1." evidence="25" ref="1">
    <original>V</original>
    <variation>A</variation>
    <location>
        <position position="2047"/>
    </location>
</feature>
<feature type="sequence conflict" description="In Ref. 1." evidence="25" ref="1">
    <original>NV</original>
    <variation>SA</variation>
    <location>
        <begin position="2251"/>
        <end position="2252"/>
    </location>
</feature>
<feature type="sequence conflict" description="In Ref. 1." evidence="25" ref="1">
    <original>G</original>
    <variation>V</variation>
    <location>
        <position position="2672"/>
    </location>
</feature>
<feature type="sequence conflict" description="In Ref. 4." evidence="25" ref="4">
    <original>VITDGARYKVGLVPLKN</original>
    <variation>PLIGCPCSSGWCSTMHI</variation>
    <location>
        <begin position="4816"/>
        <end position="4832"/>
    </location>
</feature>
<feature type="sequence conflict" description="In Ref. 4." evidence="25" ref="4">
    <original>Y</original>
    <variation>F</variation>
    <location>
        <position position="5084"/>
    </location>
</feature>
<feature type="sequence conflict" description="In Ref. 4." evidence="25" ref="4">
    <original>A</original>
    <variation>V</variation>
    <location>
        <position position="5127"/>
    </location>
</feature>
<feature type="sequence conflict" description="In Ref. 4." evidence="25" ref="4">
    <original>V</original>
    <variation>L</variation>
    <location>
        <position position="5205"/>
    </location>
</feature>
<feature type="sequence conflict" description="In Ref. 4." evidence="25" ref="4">
    <original>V</original>
    <variation>F</variation>
    <location>
        <position position="5282"/>
    </location>
</feature>
<feature type="sequence conflict" description="In Ref. 4." evidence="25" ref="4">
    <original>DA</original>
    <variation>EP</variation>
    <location>
        <begin position="5314"/>
        <end position="5315"/>
    </location>
</feature>
<feature type="sequence conflict" description="In Ref. 4." evidence="25" ref="4">
    <original>A</original>
    <variation>L</variation>
    <location>
        <position position="5417"/>
    </location>
</feature>
<feature type="sequence conflict" description="In Ref. 4." evidence="25" ref="4">
    <original>A</original>
    <variation>T</variation>
    <location>
        <position position="5578"/>
    </location>
</feature>
<feature type="sequence conflict" description="In Ref. 4." evidence="25" ref="4">
    <original>R</original>
    <variation>Q</variation>
    <location>
        <position position="5630"/>
    </location>
</feature>
<feature type="sequence conflict" description="In Ref. 4." evidence="25" ref="4">
    <original>G</original>
    <variation>R</variation>
    <location>
        <position position="6122"/>
    </location>
</feature>
<organism>
    <name type="scientific">Mus musculus</name>
    <name type="common">Mouse</name>
    <dbReference type="NCBI Taxonomy" id="10090"/>
    <lineage>
        <taxon>Eukaryota</taxon>
        <taxon>Metazoa</taxon>
        <taxon>Chordata</taxon>
        <taxon>Craniata</taxon>
        <taxon>Vertebrata</taxon>
        <taxon>Euteleostomi</taxon>
        <taxon>Mammalia</taxon>
        <taxon>Eutheria</taxon>
        <taxon>Euarchontoglires</taxon>
        <taxon>Glires</taxon>
        <taxon>Rodentia</taxon>
        <taxon>Myomorpha</taxon>
        <taxon>Muroidea</taxon>
        <taxon>Muridae</taxon>
        <taxon>Murinae</taxon>
        <taxon>Mus</taxon>
        <taxon>Mus</taxon>
    </lineage>
</organism>
<keyword id="KW-0025">Alternative splicing</keyword>
<keyword id="KW-0106">Calcium</keyword>
<keyword id="KW-1003">Cell membrane</keyword>
<keyword id="KW-0966">Cell projection</keyword>
<keyword id="KW-0217">Developmental protein</keyword>
<keyword id="KW-1015">Disulfide bond</keyword>
<keyword id="KW-0297">G-protein coupled receptor</keyword>
<keyword id="KW-0378">Hydrolase</keyword>
<keyword id="KW-0472">Membrane</keyword>
<keyword id="KW-0675">Receptor</keyword>
<keyword id="KW-1185">Reference proteome</keyword>
<keyword id="KW-0677">Repeat</keyword>
<keyword id="KW-0964">Secreted</keyword>
<keyword id="KW-0716">Sensory transduction</keyword>
<keyword id="KW-0732">Signal</keyword>
<keyword id="KW-0807">Transducer</keyword>
<keyword id="KW-0812">Transmembrane</keyword>
<keyword id="KW-1133">Transmembrane helix</keyword>
<accession>Q8VHN7</accession>
<accession>Q6ZQ69</accession>
<accession>Q810D2</accession>
<accession>Q810D3</accession>
<accession>Q91ZS0</accession>
<accession>Q91ZS1</accession>